<comment type="function">
    <molecule>Ubiquitin</molecule>
    <text evidence="2">Ubiquitin Exists either covalently attached to another protein, or free (unanchored). When covalently bound, it is conjugated to target proteins via an isopeptide bond either as a monomer (monoubiquitin), a polymer linked via different Lys residues of the ubiquitin (polyubiquitin chains) or a linear polymer linked via the initiator Met of the ubiquitin (linear polyubiquitin chains). Polyubiquitin chains, when attached to a target protein, have different functions depending on the Lys residue of the ubiquitin that is linked: Lys-6-linked may be involved in DNA repair; Lys-11-linked is involved in ERAD (endoplasmic reticulum-associated degradation) and in cell-cycle regulation; Lys-29-linked is involved in proteotoxic stress response and cell cycle; Lys-33-linked is involved in kinase modification; Lys-48-linked is involved in protein degradation via the proteasome; Lys-63-linked is involved in endocytosis, DNA-damage responses as well as in signaling processes leading to activation of the transcription factor NF-kappa-B. Linear polymer chains formed via attachment by the initiator Met lead to cell signaling. Ubiquitin is usually conjugated to Lys residues of target proteins, however, in rare cases, conjugation to Cys or Ser residues has been observed. When polyubiquitin is free (unanchored-polyubiquitin), it also has distinct roles, such as in activation of protein kinases, and in signaling.</text>
</comment>
<comment type="function">
    <molecule>Small ribosomal subunit protein eS31</molecule>
    <text evidence="2">Component of the 40S subunit of the ribosome. Part of the small subunit (SSU) processome, first precursor of the small eukaryotic ribosomal subunit. During the assembly of the SSU processome in the nucleolus, many ribosome biogenesis factors, an RNA chaperone and ribosomal proteins associate with the nascent pre-rRNA and work in concert to generate RNA folding, modifications, rearrangements and cleavage as well as targeted degradation of pre-ribosomal RNA by the RNA exosome.</text>
</comment>
<comment type="subunit">
    <molecule>Small ribosomal subunit protein eS31</molecule>
    <text evidence="2">Part of the 40S ribosomal subunit. Part of the small subunit (SSU) processome, composed of more than 70 proteins and the RNA chaperone small nucleolar RNA (snoRNA) U3.</text>
</comment>
<comment type="subcellular location">
    <molecule>Ubiquitin</molecule>
    <subcellularLocation>
        <location evidence="1">Cytoplasm</location>
    </subcellularLocation>
    <subcellularLocation>
        <location evidence="1">Nucleus</location>
    </subcellularLocation>
</comment>
<comment type="subcellular location">
    <molecule>Small ribosomal subunit protein eS31</molecule>
    <subcellularLocation>
        <location evidence="2">Nucleus</location>
        <location evidence="2">Nucleolus</location>
    </subcellularLocation>
</comment>
<comment type="miscellaneous">
    <text>Ubiquitin is encoded by 4 different genes. Uba52 and Rps27a genes code for a single copy of ubiquitin fused to the ribosomal proteins eL40 and eS31, respectively. UBB and UBC genes code for a polyubiquitin precursor with exact head to tail repeats, the number of repeats differ between species and strains.</text>
</comment>
<comment type="similarity">
    <text evidence="5">In the N-terminal section; belongs to the ubiquitin family.</text>
</comment>
<comment type="similarity">
    <text evidence="5">In the C-terminal section; belongs to the eukaryotic ribosomal protein eS31 family.</text>
</comment>
<gene>
    <name type="primary">RPS27A</name>
    <name type="synonym">UBA80</name>
</gene>
<protein>
    <recommendedName>
        <fullName evidence="5">Ubiquitin-ribosomal protein eS31 fusion protein</fullName>
    </recommendedName>
    <alternativeName>
        <fullName>Ubiquitin carboxyl extension protein 80</fullName>
    </alternativeName>
    <component>
        <recommendedName>
            <fullName>Ubiquitin</fullName>
        </recommendedName>
    </component>
    <component>
        <recommendedName>
            <fullName evidence="5">Small ribosomal subunit protein eS31</fullName>
        </recommendedName>
        <alternativeName>
            <fullName>40S ribosomal protein S27a</fullName>
        </alternativeName>
    </component>
</protein>
<sequence length="156" mass="17979">MQIFVKTLTGKTITLEVEPSDTIENVKAKIQDKEGIPPDQQRLIFAGKQLEDGRTLSDYNIQKESTLHLVLRLRGGAKKRKKKSYTTPKKNKHKRKKVKLAVLKYYKVDENGKISRLRRECPSEECGAGVFMASHFDRHYCGKCCLTYCFNKPEDK</sequence>
<dbReference type="EMBL" id="U67931">
    <property type="protein sequence ID" value="AAC60279.1"/>
    <property type="molecule type" value="mRNA"/>
</dbReference>
<dbReference type="RefSeq" id="NP_001274134.1">
    <property type="nucleotide sequence ID" value="NM_001287205.2"/>
</dbReference>
<dbReference type="RefSeq" id="NP_990284.1">
    <property type="nucleotide sequence ID" value="NM_204953.1"/>
</dbReference>
<dbReference type="PDB" id="6ZVK">
    <property type="method" value="EM"/>
    <property type="resolution" value="3.49 A"/>
    <property type="chains" value="Q3=83-151"/>
</dbReference>
<dbReference type="PDB" id="8Q7Z">
    <property type="method" value="EM"/>
    <property type="resolution" value="2.50 A"/>
    <property type="chains" value="AC=1-156"/>
</dbReference>
<dbReference type="PDB" id="8Q87">
    <property type="method" value="EM"/>
    <property type="resolution" value="2.40 A"/>
    <property type="chains" value="AC=1-156"/>
</dbReference>
<dbReference type="PDBsum" id="6ZVK"/>
<dbReference type="PDBsum" id="8Q7Z"/>
<dbReference type="PDBsum" id="8Q87"/>
<dbReference type="EMDB" id="EMD-11459"/>
<dbReference type="SMR" id="P79781"/>
<dbReference type="FunCoup" id="P79781">
    <property type="interactions" value="2252"/>
</dbReference>
<dbReference type="STRING" id="9031.ENSGALP00000050085"/>
<dbReference type="PaxDb" id="9031-ENSGALP00000013174"/>
<dbReference type="GeneID" id="395796"/>
<dbReference type="KEGG" id="gga:395796"/>
<dbReference type="CTD" id="6233"/>
<dbReference type="VEuPathDB" id="HostDB:geneid_395796"/>
<dbReference type="eggNOG" id="KOG0004">
    <property type="taxonomic scope" value="Eukaryota"/>
</dbReference>
<dbReference type="HOGENOM" id="CLU_010412_2_0_1"/>
<dbReference type="InParanoid" id="P79781"/>
<dbReference type="OMA" id="GVFMAFH"/>
<dbReference type="OrthoDB" id="428577at2759"/>
<dbReference type="PhylomeDB" id="P79781"/>
<dbReference type="Reactome" id="R-GGA-110312">
    <property type="pathway name" value="Translesion synthesis by REV1"/>
</dbReference>
<dbReference type="Reactome" id="R-GGA-110314">
    <property type="pathway name" value="Recognition of DNA damage by PCNA-containing replication complex"/>
</dbReference>
<dbReference type="Reactome" id="R-GGA-110320">
    <property type="pathway name" value="Translesion Synthesis by POLH"/>
</dbReference>
<dbReference type="Reactome" id="R-GGA-1169091">
    <property type="pathway name" value="Activation of NF-kappaB in B cells"/>
</dbReference>
<dbReference type="Reactome" id="R-GGA-1227882">
    <property type="pathway name" value="TRAF mediated activation of IRF"/>
</dbReference>
<dbReference type="Reactome" id="R-GGA-1227888">
    <property type="pathway name" value="Negative Regulation of MDA5 signaling"/>
</dbReference>
<dbReference type="Reactome" id="R-GGA-1227892">
    <property type="pathway name" value="TRAF6 mediated NF-kB activation"/>
</dbReference>
<dbReference type="Reactome" id="R-GGA-1234176">
    <property type="pathway name" value="Oxygen-dependent proline hydroxylation of Hypoxia-inducible Factor Alpha"/>
</dbReference>
<dbReference type="Reactome" id="R-GGA-1253288">
    <property type="pathway name" value="Downregulation of ERBB4 signaling"/>
</dbReference>
<dbReference type="Reactome" id="R-GGA-1295596">
    <property type="pathway name" value="Spry regulation of FGF signaling"/>
</dbReference>
<dbReference type="Reactome" id="R-GGA-1358803">
    <property type="pathway name" value="Downregulation of ERBB2:ERBB3 signaling"/>
</dbReference>
<dbReference type="Reactome" id="R-GGA-174048">
    <property type="pathway name" value="APC/C:Cdc20 mediated degradation of Cyclin B"/>
</dbReference>
<dbReference type="Reactome" id="R-GGA-174084">
    <property type="pathway name" value="Autodegradation of Cdh1 by Cdh1:APC/C"/>
</dbReference>
<dbReference type="Reactome" id="R-GGA-174113">
    <property type="pathway name" value="SCF-beta-TrCP mediated degradation of Emi1"/>
</dbReference>
<dbReference type="Reactome" id="R-GGA-174154">
    <property type="pathway name" value="APC/C:Cdc20 mediated degradation of Securin"/>
</dbReference>
<dbReference type="Reactome" id="R-GGA-174178">
    <property type="pathway name" value="APC/C:Cdh1 mediated degradation of Cdc20 and other APC/C:Cdh1 targeted proteins in late mitosis/early G1"/>
</dbReference>
<dbReference type="Reactome" id="R-GGA-174184">
    <property type="pathway name" value="Cdc20:Phospho-APC/C mediated degradation of Cyclin A"/>
</dbReference>
<dbReference type="Reactome" id="R-GGA-179409">
    <property type="pathway name" value="APC-Cdc20 mediated degradation of Nek2A"/>
</dbReference>
<dbReference type="Reactome" id="R-GGA-1799339">
    <property type="pathway name" value="SRP-dependent cotranslational protein targeting to membrane"/>
</dbReference>
<dbReference type="Reactome" id="R-GGA-182971">
    <property type="pathway name" value="EGFR downregulation"/>
</dbReference>
<dbReference type="Reactome" id="R-GGA-187577">
    <property type="pathway name" value="SCF(Skp2)-mediated degradation of p27/p21"/>
</dbReference>
<dbReference type="Reactome" id="R-GGA-195253">
    <property type="pathway name" value="Degradation of beta-catenin by the destruction complex"/>
</dbReference>
<dbReference type="Reactome" id="R-GGA-201681">
    <property type="pathway name" value="TCF dependent signaling in response to WNT"/>
</dbReference>
<dbReference type="Reactome" id="R-GGA-202424">
    <property type="pathway name" value="Downstream TCR signaling"/>
</dbReference>
<dbReference type="Reactome" id="R-GGA-205043">
    <property type="pathway name" value="NRIF signals cell death from the nucleus"/>
</dbReference>
<dbReference type="Reactome" id="R-GGA-209543">
    <property type="pathway name" value="p75NTR recruits signalling complexes"/>
</dbReference>
<dbReference type="Reactome" id="R-GGA-209560">
    <property type="pathway name" value="NF-kB is activated and signals survival"/>
</dbReference>
<dbReference type="Reactome" id="R-GGA-2122948">
    <property type="pathway name" value="Activated NOTCH1 Transmits Signal to the Nucleus"/>
</dbReference>
<dbReference type="Reactome" id="R-GGA-2173788">
    <property type="pathway name" value="Downregulation of TGF-beta receptor signaling"/>
</dbReference>
<dbReference type="Reactome" id="R-GGA-2173791">
    <property type="pathway name" value="TGF-beta receptor signaling in EMT (epithelial to mesenchymal transition)"/>
</dbReference>
<dbReference type="Reactome" id="R-GGA-2173795">
    <property type="pathway name" value="Downregulation of SMAD2/3:SMAD4 transcriptional activity"/>
</dbReference>
<dbReference type="Reactome" id="R-GGA-2173796">
    <property type="pathway name" value="SMAD2/SMAD3:SMAD4 heterotrimer regulates transcription"/>
</dbReference>
<dbReference type="Reactome" id="R-GGA-2467813">
    <property type="pathway name" value="Separation of Sister Chromatids"/>
</dbReference>
<dbReference type="Reactome" id="R-GGA-2559582">
    <property type="pathway name" value="Senescence-Associated Secretory Phenotype (SASP)"/>
</dbReference>
<dbReference type="Reactome" id="R-GGA-2565942">
    <property type="pathway name" value="Regulation of PLK1 Activity at G2/M Transition"/>
</dbReference>
<dbReference type="Reactome" id="R-GGA-2672351">
    <property type="pathway name" value="Stimuli-sensing channels"/>
</dbReference>
<dbReference type="Reactome" id="R-GGA-2871837">
    <property type="pathway name" value="FCERI mediated NF-kB activation"/>
</dbReference>
<dbReference type="Reactome" id="R-GGA-3134975">
    <property type="pathway name" value="Regulation of innate immune responses to cytosolic DNA"/>
</dbReference>
<dbReference type="Reactome" id="R-GGA-349425">
    <property type="pathway name" value="Autodegradation of the E3 ubiquitin ligase COP1"/>
</dbReference>
<dbReference type="Reactome" id="R-GGA-351465">
    <property type="pathway name" value="Fanconi Anemia Pathway in DNA repair"/>
</dbReference>
<dbReference type="Reactome" id="R-GGA-353299">
    <property type="pathway name" value="RAD18 and ubiquitinated PCNA-mediated recruitment of translesion polymerases"/>
</dbReference>
<dbReference type="Reactome" id="R-GGA-353303">
    <property type="pathway name" value="Nucleotide Excision Repair"/>
</dbReference>
<dbReference type="Reactome" id="R-GGA-3769402">
    <property type="pathway name" value="Deactivation of the beta-catenin transactivating complex"/>
</dbReference>
<dbReference type="Reactome" id="R-GGA-382556">
    <property type="pathway name" value="ABC-family proteins mediated transport"/>
</dbReference>
<dbReference type="Reactome" id="R-GGA-433822">
    <property type="pathway name" value="NFkB and MAPK activation mediated by TRAF6"/>
</dbReference>
<dbReference type="Reactome" id="R-GGA-433871">
    <property type="pathway name" value="TRAF6 mediated induction of proinflammatory cytokines"/>
</dbReference>
<dbReference type="Reactome" id="R-GGA-434001">
    <property type="pathway name" value="TAK1 activates NFkB by phosphorylation and activation of IKKs complex"/>
</dbReference>
<dbReference type="Reactome" id="R-GGA-434131">
    <property type="pathway name" value="NFkB activation mediated by RIP1 complexed with activated TLR3"/>
</dbReference>
<dbReference type="Reactome" id="R-GGA-437980">
    <property type="pathway name" value="Activated TAK1 mediates p38 MAP kinase phosphorylation"/>
</dbReference>
<dbReference type="Reactome" id="R-GGA-437986">
    <property type="pathway name" value="Activated TAK1 mediates Jun kinases (JNK) phosphorylation and activation"/>
</dbReference>
<dbReference type="Reactome" id="R-GGA-450302">
    <property type="pathway name" value="activated TAK1 mediates p38 MAPK activation"/>
</dbReference>
<dbReference type="Reactome" id="R-GGA-450321">
    <property type="pathway name" value="JNK (c-Jun kinases) phosphorylation and activation mediated by activated human TAK1"/>
</dbReference>
<dbReference type="Reactome" id="R-GGA-450408">
    <property type="pathway name" value="AUF1 (hnRNP D0) binds and destabilizes mRNA"/>
</dbReference>
<dbReference type="Reactome" id="R-GGA-4641257">
    <property type="pathway name" value="Degradation of AXIN"/>
</dbReference>
<dbReference type="Reactome" id="R-GGA-4641258">
    <property type="pathway name" value="Degradation of DVL"/>
</dbReference>
<dbReference type="Reactome" id="R-GGA-4641263">
    <property type="pathway name" value="Regulation of FZD by ubiquitination"/>
</dbReference>
<dbReference type="Reactome" id="R-GGA-532668">
    <property type="pathway name" value="N-glycan trimming in the ER and Calnexin/Calreticulin cycle"/>
</dbReference>
<dbReference type="Reactome" id="R-GGA-5357905">
    <property type="pathway name" value="Regulation of TNFR1 signaling"/>
</dbReference>
<dbReference type="Reactome" id="R-GGA-5357956">
    <property type="pathway name" value="TNFR1-induced NF-kappa-B signaling pathway"/>
</dbReference>
<dbReference type="Reactome" id="R-GGA-5358346">
    <property type="pathway name" value="Hedgehog ligand biogenesis"/>
</dbReference>
<dbReference type="Reactome" id="R-GGA-5607764">
    <property type="pathway name" value="CLEC7A (Dectin-1) signaling"/>
</dbReference>
<dbReference type="Reactome" id="R-GGA-5610780">
    <property type="pathway name" value="Degradation of GLI1 by the proteasome"/>
</dbReference>
<dbReference type="Reactome" id="R-GGA-5610785">
    <property type="pathway name" value="GLI3 is processed to GLI3R by the proteasome"/>
</dbReference>
<dbReference type="Reactome" id="R-GGA-5632684">
    <property type="pathway name" value="Hedgehog 'on' state"/>
</dbReference>
<dbReference type="Reactome" id="R-GGA-5654726">
    <property type="pathway name" value="Negative regulation of FGFR1 signaling"/>
</dbReference>
<dbReference type="Reactome" id="R-GGA-5654727">
    <property type="pathway name" value="Negative regulation of FGFR2 signaling"/>
</dbReference>
<dbReference type="Reactome" id="R-GGA-5654732">
    <property type="pathway name" value="Negative regulation of FGFR3 signaling"/>
</dbReference>
<dbReference type="Reactome" id="R-GGA-5654733">
    <property type="pathway name" value="Negative regulation of FGFR4 signaling"/>
</dbReference>
<dbReference type="Reactome" id="R-GGA-5655862">
    <property type="pathway name" value="Translesion synthesis by POLK"/>
</dbReference>
<dbReference type="Reactome" id="R-GGA-5656121">
    <property type="pathway name" value="Translesion synthesis by POLI"/>
</dbReference>
<dbReference type="Reactome" id="R-GGA-5656169">
    <property type="pathway name" value="Termination of translesion DNA synthesis"/>
</dbReference>
<dbReference type="Reactome" id="R-GGA-5668541">
    <property type="pathway name" value="TNFR2 non-canonical NF-kB pathway"/>
</dbReference>
<dbReference type="Reactome" id="R-GGA-5675221">
    <property type="pathway name" value="Negative regulation of MAPK pathway"/>
</dbReference>
<dbReference type="Reactome" id="R-GGA-5675482">
    <property type="pathway name" value="Regulation of necroptotic cell death"/>
</dbReference>
<dbReference type="Reactome" id="R-GGA-5684264">
    <property type="pathway name" value="MAP3K8 (TPL2)-dependent MAPK1/3 activation"/>
</dbReference>
<dbReference type="Reactome" id="R-GGA-5685942">
    <property type="pathway name" value="HDR through Homologous Recombination (HRR)"/>
</dbReference>
<dbReference type="Reactome" id="R-GGA-5687128">
    <property type="pathway name" value="MAPK6/MAPK4 signaling"/>
</dbReference>
<dbReference type="Reactome" id="R-GGA-5689603">
    <property type="pathway name" value="UCH proteinases"/>
</dbReference>
<dbReference type="Reactome" id="R-GGA-5689877">
    <property type="pathway name" value="Josephin domain DUBs"/>
</dbReference>
<dbReference type="Reactome" id="R-GGA-5689880">
    <property type="pathway name" value="Ub-specific processing proteases"/>
</dbReference>
<dbReference type="Reactome" id="R-GGA-5689896">
    <property type="pathway name" value="Ovarian tumor domain proteases"/>
</dbReference>
<dbReference type="Reactome" id="R-GGA-5689901">
    <property type="pathway name" value="Metalloprotease DUBs"/>
</dbReference>
<dbReference type="Reactome" id="R-GGA-5693565">
    <property type="pathway name" value="Recruitment and ATM-mediated phosphorylation of repair and signaling proteins at DNA double strand breaks"/>
</dbReference>
<dbReference type="Reactome" id="R-GGA-5696394">
    <property type="pathway name" value="DNA Damage Recognition in GG-NER"/>
</dbReference>
<dbReference type="Reactome" id="R-GGA-5696395">
    <property type="pathway name" value="Formation of Incision Complex in GG-NER"/>
</dbReference>
<dbReference type="Reactome" id="R-GGA-5696397">
    <property type="pathway name" value="Gap-filling DNA repair synthesis and ligation in GG-NER"/>
</dbReference>
<dbReference type="Reactome" id="R-GGA-5696400">
    <property type="pathway name" value="Dual Incision in GG-NER"/>
</dbReference>
<dbReference type="Reactome" id="R-GGA-573298">
    <property type="pathway name" value="NFkB and MAPK activation mediated by TRAF6 upon TLR7 or TLR21 stimulation"/>
</dbReference>
<dbReference type="Reactome" id="R-GGA-6781823">
    <property type="pathway name" value="Formation of TC-NER Pre-Incision Complex"/>
</dbReference>
<dbReference type="Reactome" id="R-GGA-6782135">
    <property type="pathway name" value="Dual incision in TC-NER"/>
</dbReference>
<dbReference type="Reactome" id="R-GGA-6782210">
    <property type="pathway name" value="Gap-filling DNA repair synthesis and ligation in TC-NER"/>
</dbReference>
<dbReference type="Reactome" id="R-GGA-6783310">
    <property type="pathway name" value="Fanconi Anemia Pathway"/>
</dbReference>
<dbReference type="Reactome" id="R-GGA-6804756">
    <property type="pathway name" value="Regulation of TP53 Activity through Phosphorylation"/>
</dbReference>
<dbReference type="Reactome" id="R-GGA-6804757">
    <property type="pathway name" value="Regulation of TP53 Degradation"/>
</dbReference>
<dbReference type="Reactome" id="R-GGA-6804760">
    <property type="pathway name" value="Regulation of TP53 Activity through Methylation"/>
</dbReference>
<dbReference type="Reactome" id="R-GGA-6807004">
    <property type="pathway name" value="Negative regulation of MET activity"/>
</dbReference>
<dbReference type="Reactome" id="R-GGA-68867">
    <property type="pathway name" value="Assembly of the pre-replicative complex"/>
</dbReference>
<dbReference type="Reactome" id="R-GGA-68949">
    <property type="pathway name" value="Orc1 removal from chromatin"/>
</dbReference>
<dbReference type="Reactome" id="R-GGA-69017">
    <property type="pathway name" value="CDK-mediated phosphorylation and removal of Cdc6"/>
</dbReference>
<dbReference type="Reactome" id="R-GGA-69231">
    <property type="pathway name" value="Cyclin D associated events in G1"/>
</dbReference>
<dbReference type="Reactome" id="R-GGA-69601">
    <property type="pathway name" value="Ubiquitin Mediated Degradation of Phosphorylated Cdc25A"/>
</dbReference>
<dbReference type="Reactome" id="R-GGA-72649">
    <property type="pathway name" value="Translation initiation complex formation"/>
</dbReference>
<dbReference type="Reactome" id="R-GGA-72689">
    <property type="pathway name" value="Formation of a pool of free 40S subunits"/>
</dbReference>
<dbReference type="Reactome" id="R-GGA-72695">
    <property type="pathway name" value="Formation of the ternary complex, and subsequently, the 43S complex"/>
</dbReference>
<dbReference type="Reactome" id="R-GGA-72702">
    <property type="pathway name" value="Ribosomal scanning and start codon recognition"/>
</dbReference>
<dbReference type="Reactome" id="R-GGA-72706">
    <property type="pathway name" value="GTP hydrolysis and joining of the 60S ribosomal subunit"/>
</dbReference>
<dbReference type="Reactome" id="R-GGA-75815">
    <property type="pathway name" value="Ubiquitin-dependent degradation of Cyclin D"/>
</dbReference>
<dbReference type="Reactome" id="R-GGA-8849469">
    <property type="pathway name" value="PTK6 Regulates RTKs and Their Effectors AKT1 and DOK1"/>
</dbReference>
<dbReference type="Reactome" id="R-GGA-8854050">
    <property type="pathway name" value="FBXL7 down-regulates AURKA during mitotic entry and in early mitosis"/>
</dbReference>
<dbReference type="Reactome" id="R-GGA-8856825">
    <property type="pathway name" value="Cargo recognition for clathrin-mediated endocytosis"/>
</dbReference>
<dbReference type="Reactome" id="R-GGA-8856828">
    <property type="pathway name" value="Clathrin-mediated endocytosis"/>
</dbReference>
<dbReference type="Reactome" id="R-GGA-8863795">
    <property type="pathway name" value="Downregulation of ERBB2 signaling"/>
</dbReference>
<dbReference type="Reactome" id="R-GGA-8866427">
    <property type="pathway name" value="VLDLR internalisation and degradation"/>
</dbReference>
<dbReference type="Reactome" id="R-GGA-8866652">
    <property type="pathway name" value="Synthesis of active ubiquitin: roles of E1 and E2 enzymes"/>
</dbReference>
<dbReference type="Reactome" id="R-GGA-8866654">
    <property type="pathway name" value="E3 ubiquitin ligases ubiquitinate target proteins"/>
</dbReference>
<dbReference type="Reactome" id="R-GGA-8939236">
    <property type="pathway name" value="RUNX1 regulates transcription of genes involved in differentiation of HSCs"/>
</dbReference>
<dbReference type="Reactome" id="R-GGA-8939902">
    <property type="pathway name" value="Regulation of RUNX2 expression and activity"/>
</dbReference>
<dbReference type="Reactome" id="R-GGA-8941858">
    <property type="pathway name" value="Regulation of RUNX3 expression and activity"/>
</dbReference>
<dbReference type="Reactome" id="R-GGA-8948747">
    <property type="pathway name" value="Regulation of PTEN localization"/>
</dbReference>
<dbReference type="Reactome" id="R-GGA-8948751">
    <property type="pathway name" value="Regulation of PTEN stability and activity"/>
</dbReference>
<dbReference type="Reactome" id="R-GGA-8951664">
    <property type="pathway name" value="Neddylation"/>
</dbReference>
<dbReference type="Reactome" id="R-GGA-901032">
    <property type="pathway name" value="ER Quality Control Compartment (ERQC)"/>
</dbReference>
<dbReference type="Reactome" id="R-GGA-9013507">
    <property type="pathway name" value="NOTCH3 Activation and Transmission of Signal to the Nucleus"/>
</dbReference>
<dbReference type="Reactome" id="R-GGA-9020702">
    <property type="pathway name" value="Interleukin-1 signaling"/>
</dbReference>
<dbReference type="Reactome" id="R-GGA-9033241">
    <property type="pathway name" value="Peroxisomal protein import"/>
</dbReference>
<dbReference type="Reactome" id="R-GGA-909733">
    <property type="pathway name" value="Interferon alpha/beta signaling"/>
</dbReference>
<dbReference type="Reactome" id="R-GGA-912631">
    <property type="pathway name" value="Regulation of signaling by CBL"/>
</dbReference>
<dbReference type="Reactome" id="R-GGA-917729">
    <property type="pathway name" value="Endosomal Sorting Complex Required For Transport (ESCRT)"/>
</dbReference>
<dbReference type="Reactome" id="R-GGA-917937">
    <property type="pathway name" value="Iron uptake and transport"/>
</dbReference>
<dbReference type="Reactome" id="R-GGA-936964">
    <property type="pathway name" value="Activation of IRF3, IRF7 mediated by TBK1, IKKEpsilon (IKBKE)"/>
</dbReference>
<dbReference type="Reactome" id="R-GGA-937041">
    <property type="pathway name" value="IKK complex recruitment mediated by RIP1"/>
</dbReference>
<dbReference type="Reactome" id="R-GGA-937042">
    <property type="pathway name" value="IRAK2 mediated activation of TAK1 complex"/>
</dbReference>
<dbReference type="Reactome" id="R-GGA-937072">
    <property type="pathway name" value="TRAF6-mediated induction of TAK1 complex within TLR4 complex"/>
</dbReference>
<dbReference type="Reactome" id="R-GGA-9645460">
    <property type="pathway name" value="Alpha-protein kinase 1 signaling pathway"/>
</dbReference>
<dbReference type="Reactome" id="R-GGA-9646399">
    <property type="pathway name" value="Aggrephagy"/>
</dbReference>
<dbReference type="Reactome" id="R-GGA-9664873">
    <property type="pathway name" value="Pexophagy"/>
</dbReference>
<dbReference type="Reactome" id="R-GGA-9708530">
    <property type="pathway name" value="Regulation of BACH1 activity"/>
</dbReference>
<dbReference type="Reactome" id="R-GGA-975163">
    <property type="pathway name" value="IRAK2 mediated activation of TAK1 complex upon TLR7/8 or 9 stimulation"/>
</dbReference>
<dbReference type="Reactome" id="R-GGA-9755511">
    <property type="pathway name" value="KEAP1-NFE2L2 pathway"/>
</dbReference>
<dbReference type="Reactome" id="R-GGA-9758274">
    <property type="pathway name" value="Regulation of NF-kappa B signaling"/>
</dbReference>
<dbReference type="Reactome" id="R-GGA-975956">
    <property type="pathway name" value="Nonsense Mediated Decay (NMD) independent of the Exon Junction Complex (EJC)"/>
</dbReference>
<dbReference type="Reactome" id="R-GGA-975957">
    <property type="pathway name" value="Nonsense Mediated Decay (NMD) enhanced by the Exon Junction Complex (EJC)"/>
</dbReference>
<dbReference type="Reactome" id="R-GGA-9762114">
    <property type="pathway name" value="GSK3B and BTRC:CUL1-mediated-degradation of NFE2L2"/>
</dbReference>
<dbReference type="Reactome" id="R-GGA-9824878">
    <property type="pathway name" value="Regulation of TBK1, IKKEpsilon (IKBKE)-mediated activation of IRF3, IRF7"/>
</dbReference>
<dbReference type="Reactome" id="R-GGA-983168">
    <property type="pathway name" value="Antigen processing: Ubiquitination &amp; Proteasome degradation"/>
</dbReference>
<dbReference type="Reactome" id="R-GGA-9861718">
    <property type="pathway name" value="Regulation of pyruvate metabolism"/>
</dbReference>
<dbReference type="PRO" id="PR:P79781"/>
<dbReference type="Proteomes" id="UP000000539">
    <property type="component" value="Chromosome 3"/>
</dbReference>
<dbReference type="Bgee" id="ENSGALG00000036790">
    <property type="expression patterns" value="Expressed in granulocyte and 13 other cell types or tissues"/>
</dbReference>
<dbReference type="GO" id="GO:0005737">
    <property type="term" value="C:cytoplasm"/>
    <property type="evidence" value="ECO:0000318"/>
    <property type="project" value="GO_Central"/>
</dbReference>
<dbReference type="GO" id="GO:0005730">
    <property type="term" value="C:nucleolus"/>
    <property type="evidence" value="ECO:0007669"/>
    <property type="project" value="UniProtKB-SubCell"/>
</dbReference>
<dbReference type="GO" id="GO:0005654">
    <property type="term" value="C:nucleoplasm"/>
    <property type="evidence" value="ECO:0000304"/>
    <property type="project" value="Reactome"/>
</dbReference>
<dbReference type="GO" id="GO:0005634">
    <property type="term" value="C:nucleus"/>
    <property type="evidence" value="ECO:0000318"/>
    <property type="project" value="GO_Central"/>
</dbReference>
<dbReference type="GO" id="GO:0005840">
    <property type="term" value="C:ribosome"/>
    <property type="evidence" value="ECO:0007669"/>
    <property type="project" value="UniProtKB-KW"/>
</dbReference>
<dbReference type="GO" id="GO:0032040">
    <property type="term" value="C:small-subunit processome"/>
    <property type="evidence" value="ECO:0000250"/>
    <property type="project" value="UniProtKB"/>
</dbReference>
<dbReference type="GO" id="GO:0031386">
    <property type="term" value="F:protein tag activity"/>
    <property type="evidence" value="ECO:0000318"/>
    <property type="project" value="GO_Central"/>
</dbReference>
<dbReference type="GO" id="GO:0003735">
    <property type="term" value="F:structural constituent of ribosome"/>
    <property type="evidence" value="ECO:0000318"/>
    <property type="project" value="GO_Central"/>
</dbReference>
<dbReference type="GO" id="GO:0031625">
    <property type="term" value="F:ubiquitin protein ligase binding"/>
    <property type="evidence" value="ECO:0000318"/>
    <property type="project" value="GO_Central"/>
</dbReference>
<dbReference type="GO" id="GO:0008270">
    <property type="term" value="F:zinc ion binding"/>
    <property type="evidence" value="ECO:0007669"/>
    <property type="project" value="UniProtKB-KW"/>
</dbReference>
<dbReference type="GO" id="GO:0019941">
    <property type="term" value="P:modification-dependent protein catabolic process"/>
    <property type="evidence" value="ECO:0000318"/>
    <property type="project" value="GO_Central"/>
</dbReference>
<dbReference type="GO" id="GO:0016567">
    <property type="term" value="P:protein ubiquitination"/>
    <property type="evidence" value="ECO:0000318"/>
    <property type="project" value="GO_Central"/>
</dbReference>
<dbReference type="GO" id="GO:0042274">
    <property type="term" value="P:ribosomal small subunit biogenesis"/>
    <property type="evidence" value="ECO:0000250"/>
    <property type="project" value="UniProtKB"/>
</dbReference>
<dbReference type="GO" id="GO:0006412">
    <property type="term" value="P:translation"/>
    <property type="evidence" value="ECO:0007669"/>
    <property type="project" value="InterPro"/>
</dbReference>
<dbReference type="CDD" id="cd01803">
    <property type="entry name" value="Ubl_ubiquitin"/>
    <property type="match status" value="1"/>
</dbReference>
<dbReference type="FunFam" id="3.10.20.90:FF:000008">
    <property type="entry name" value="Ubiquitin-40S ribosomal protein S27a"/>
    <property type="match status" value="1"/>
</dbReference>
<dbReference type="Gene3D" id="6.20.50.150">
    <property type="match status" value="1"/>
</dbReference>
<dbReference type="Gene3D" id="3.10.20.90">
    <property type="entry name" value="Phosphatidylinositol 3-kinase Catalytic Subunit, Chain A, domain 1"/>
    <property type="match status" value="1"/>
</dbReference>
<dbReference type="InterPro" id="IPR002906">
    <property type="entry name" value="Ribosomal_eS31"/>
</dbReference>
<dbReference type="InterPro" id="IPR038582">
    <property type="entry name" value="Ribosomal_eS31_euk-type_sf"/>
</dbReference>
<dbReference type="InterPro" id="IPR011332">
    <property type="entry name" value="Ribosomal_zn-bd"/>
</dbReference>
<dbReference type="InterPro" id="IPR000626">
    <property type="entry name" value="Ubiquitin-like_dom"/>
</dbReference>
<dbReference type="InterPro" id="IPR029071">
    <property type="entry name" value="Ubiquitin-like_domsf"/>
</dbReference>
<dbReference type="InterPro" id="IPR019954">
    <property type="entry name" value="Ubiquitin_CS"/>
</dbReference>
<dbReference type="InterPro" id="IPR019956">
    <property type="entry name" value="Ubiquitin_dom"/>
</dbReference>
<dbReference type="InterPro" id="IPR050158">
    <property type="entry name" value="Ubiquitin_ubiquitin-like"/>
</dbReference>
<dbReference type="PANTHER" id="PTHR10666">
    <property type="entry name" value="UBIQUITIN"/>
    <property type="match status" value="1"/>
</dbReference>
<dbReference type="Pfam" id="PF01599">
    <property type="entry name" value="Ribosomal_S27"/>
    <property type="match status" value="1"/>
</dbReference>
<dbReference type="Pfam" id="PF00240">
    <property type="entry name" value="ubiquitin"/>
    <property type="match status" value="1"/>
</dbReference>
<dbReference type="PRINTS" id="PR00348">
    <property type="entry name" value="UBIQUITIN"/>
</dbReference>
<dbReference type="SMART" id="SM01402">
    <property type="entry name" value="Ribosomal_S27"/>
    <property type="match status" value="1"/>
</dbReference>
<dbReference type="SMART" id="SM00213">
    <property type="entry name" value="UBQ"/>
    <property type="match status" value="1"/>
</dbReference>
<dbReference type="SUPFAM" id="SSF54236">
    <property type="entry name" value="Ubiquitin-like"/>
    <property type="match status" value="1"/>
</dbReference>
<dbReference type="SUPFAM" id="SSF57829">
    <property type="entry name" value="Zn-binding ribosomal proteins"/>
    <property type="match status" value="1"/>
</dbReference>
<dbReference type="PROSITE" id="PS00299">
    <property type="entry name" value="UBIQUITIN_1"/>
    <property type="match status" value="1"/>
</dbReference>
<dbReference type="PROSITE" id="PS50053">
    <property type="entry name" value="UBIQUITIN_2"/>
    <property type="match status" value="1"/>
</dbReference>
<proteinExistence type="evidence at protein level"/>
<reference key="1">
    <citation type="journal article" date="1997" name="Gene">
        <title>Characterization and expression of two chicken cDNAs encoding ubiquitin fused to ribosomal proteins of 52 and 80 amino acids.</title>
        <authorList>
            <person name="Mezquita J."/>
            <person name="Pau M."/>
            <person name="Mezquita C."/>
        </authorList>
    </citation>
    <scope>NUCLEOTIDE SEQUENCE [MRNA]</scope>
    <source>
        <strain>Hubbard White Mountain</strain>
        <tissue>Kidney</tissue>
        <tissue>Testis</tissue>
    </source>
</reference>
<name>RS27A_CHICK</name>
<keyword id="KW-0002">3D-structure</keyword>
<keyword id="KW-0963">Cytoplasm</keyword>
<keyword id="KW-1017">Isopeptide bond</keyword>
<keyword id="KW-0479">Metal-binding</keyword>
<keyword id="KW-0539">Nucleus</keyword>
<keyword id="KW-1185">Reference proteome</keyword>
<keyword id="KW-0687">Ribonucleoprotein</keyword>
<keyword id="KW-0689">Ribosomal protein</keyword>
<keyword id="KW-0832">Ubl conjugation</keyword>
<keyword id="KW-0862">Zinc</keyword>
<keyword id="KW-0863">Zinc-finger</keyword>
<organism>
    <name type="scientific">Gallus gallus</name>
    <name type="common">Chicken</name>
    <dbReference type="NCBI Taxonomy" id="9031"/>
    <lineage>
        <taxon>Eukaryota</taxon>
        <taxon>Metazoa</taxon>
        <taxon>Chordata</taxon>
        <taxon>Craniata</taxon>
        <taxon>Vertebrata</taxon>
        <taxon>Euteleostomi</taxon>
        <taxon>Archelosauria</taxon>
        <taxon>Archosauria</taxon>
        <taxon>Dinosauria</taxon>
        <taxon>Saurischia</taxon>
        <taxon>Theropoda</taxon>
        <taxon>Coelurosauria</taxon>
        <taxon>Aves</taxon>
        <taxon>Neognathae</taxon>
        <taxon>Galloanserae</taxon>
        <taxon>Galliformes</taxon>
        <taxon>Phasianidae</taxon>
        <taxon>Phasianinae</taxon>
        <taxon>Gallus</taxon>
    </lineage>
</organism>
<accession>P79781</accession>
<accession>P02248</accession>
<accession>P02249</accession>
<accession>P02250</accession>
<accession>P62973</accession>
<accession>Q29120</accession>
<accession>Q91887</accession>
<accession>Q91888</accession>
<feature type="chain" id="PRO_0000396481" description="Ubiquitin">
    <location>
        <begin position="1"/>
        <end position="76"/>
    </location>
</feature>
<feature type="chain" id="PRO_0000137665" description="Small ribosomal subunit protein eS31">
    <location>
        <begin position="77"/>
        <end position="156"/>
    </location>
</feature>
<feature type="domain" description="Ubiquitin-like" evidence="3">
    <location>
        <begin position="1"/>
        <end position="76"/>
    </location>
</feature>
<feature type="zinc finger region" description="C4-type">
    <location>
        <begin position="121"/>
        <end position="144"/>
    </location>
</feature>
<feature type="region of interest" description="Disordered" evidence="4">
    <location>
        <begin position="76"/>
        <end position="95"/>
    </location>
</feature>
<feature type="site" description="Interacts with activating enzyme">
    <location>
        <position position="54"/>
    </location>
</feature>
<feature type="site" description="Essential for function">
    <location>
        <position position="68"/>
    </location>
</feature>
<feature type="site" description="Interacts with activating enzyme">
    <location>
        <position position="72"/>
    </location>
</feature>
<feature type="cross-link" description="Glycyl lysine isopeptide (Lys-Gly) (interchain with G-Cter in ubiquitin)" evidence="2">
    <location>
        <position position="6"/>
    </location>
</feature>
<feature type="cross-link" description="Glycyl lysine isopeptide (Lys-Gly) (interchain with G-Cter in ubiquitin)" evidence="2">
    <location>
        <position position="11"/>
    </location>
</feature>
<feature type="cross-link" description="Glycyl lysine isopeptide (Lys-Gly) (interchain with G-Cter in ubiquitin)" evidence="2">
    <location>
        <position position="27"/>
    </location>
</feature>
<feature type="cross-link" description="Glycyl lysine isopeptide (Lys-Gly) (interchain with G-Cter in ubiquitin)" evidence="2">
    <location>
        <position position="29"/>
    </location>
</feature>
<feature type="cross-link" description="Glycyl lysine isopeptide (Lys-Gly) (interchain with G-Cter in ubiquitin)" evidence="2">
    <location>
        <position position="33"/>
    </location>
</feature>
<feature type="cross-link" description="Glycyl lysine isopeptide (Lys-Gly) (interchain with G-Cter in ubiquitin)" evidence="2">
    <location>
        <position position="48"/>
    </location>
</feature>
<feature type="cross-link" description="Glycyl lysine isopeptide (Lys-Gly) (interchain with G-Cter in ubiquitin)" evidence="2">
    <location>
        <position position="63"/>
    </location>
</feature>
<feature type="cross-link" description="Glycyl lysine isopeptide (Gly-Lys) (interchain with K-? in acceptor proteins)" evidence="3">
    <location>
        <position position="76"/>
    </location>
</feature>
<evidence type="ECO:0000250" key="1"/>
<evidence type="ECO:0000250" key="2">
    <source>
        <dbReference type="UniProtKB" id="P62979"/>
    </source>
</evidence>
<evidence type="ECO:0000255" key="3">
    <source>
        <dbReference type="PROSITE-ProRule" id="PRU00214"/>
    </source>
</evidence>
<evidence type="ECO:0000256" key="4">
    <source>
        <dbReference type="SAM" id="MobiDB-lite"/>
    </source>
</evidence>
<evidence type="ECO:0000305" key="5"/>